<feature type="chain" id="PRO_0000373854" description="Uncharacterized methyltransferase GTNG_2476">
    <location>
        <begin position="1"/>
        <end position="215"/>
    </location>
</feature>
<feature type="binding site" evidence="1">
    <location>
        <position position="53"/>
    </location>
    <ligand>
        <name>S-adenosyl-L-methionine</name>
        <dbReference type="ChEBI" id="CHEBI:59789"/>
    </ligand>
</feature>
<feature type="binding site" evidence="1">
    <location>
        <position position="74"/>
    </location>
    <ligand>
        <name>S-adenosyl-L-methionine</name>
        <dbReference type="ChEBI" id="CHEBI:59789"/>
    </ligand>
</feature>
<feature type="binding site" evidence="1">
    <location>
        <position position="97"/>
    </location>
    <ligand>
        <name>S-adenosyl-L-methionine</name>
        <dbReference type="ChEBI" id="CHEBI:59789"/>
    </ligand>
</feature>
<evidence type="ECO:0000255" key="1">
    <source>
        <dbReference type="HAMAP-Rule" id="MF_02100"/>
    </source>
</evidence>
<keyword id="KW-0489">Methyltransferase</keyword>
<keyword id="KW-0949">S-adenosyl-L-methionine</keyword>
<keyword id="KW-0808">Transferase</keyword>
<accession>A4IR67</accession>
<dbReference type="EC" id="2.1.1.-" evidence="1"/>
<dbReference type="EMBL" id="CP000557">
    <property type="protein sequence ID" value="ABO67821.1"/>
    <property type="molecule type" value="Genomic_DNA"/>
</dbReference>
<dbReference type="RefSeq" id="WP_011887865.1">
    <property type="nucleotide sequence ID" value="NC_009328.1"/>
</dbReference>
<dbReference type="SMR" id="A4IR67"/>
<dbReference type="GeneID" id="87623376"/>
<dbReference type="KEGG" id="gtn:GTNG_2476"/>
<dbReference type="eggNOG" id="COG2226">
    <property type="taxonomic scope" value="Bacteria"/>
</dbReference>
<dbReference type="HOGENOM" id="CLU_111961_0_0_9"/>
<dbReference type="Proteomes" id="UP000001578">
    <property type="component" value="Chromosome"/>
</dbReference>
<dbReference type="GO" id="GO:0008757">
    <property type="term" value="F:S-adenosylmethionine-dependent methyltransferase activity"/>
    <property type="evidence" value="ECO:0007669"/>
    <property type="project" value="UniProtKB-UniRule"/>
</dbReference>
<dbReference type="GO" id="GO:0032259">
    <property type="term" value="P:methylation"/>
    <property type="evidence" value="ECO:0007669"/>
    <property type="project" value="UniProtKB-KW"/>
</dbReference>
<dbReference type="CDD" id="cd02440">
    <property type="entry name" value="AdoMet_MTases"/>
    <property type="match status" value="1"/>
</dbReference>
<dbReference type="Gene3D" id="3.40.50.150">
    <property type="entry name" value="Vaccinia Virus protein VP39"/>
    <property type="match status" value="1"/>
</dbReference>
<dbReference type="HAMAP" id="MF_02100">
    <property type="entry name" value="Methyltr_YrrT"/>
    <property type="match status" value="1"/>
</dbReference>
<dbReference type="InterPro" id="IPR013216">
    <property type="entry name" value="Methyltransf_11"/>
</dbReference>
<dbReference type="InterPro" id="IPR029063">
    <property type="entry name" value="SAM-dependent_MTases_sf"/>
</dbReference>
<dbReference type="InterPro" id="IPR023553">
    <property type="entry name" value="Uncharacterised_MeTfrase_YrrT"/>
</dbReference>
<dbReference type="PANTHER" id="PTHR43861:SF1">
    <property type="entry name" value="TRANS-ACONITATE 2-METHYLTRANSFERASE"/>
    <property type="match status" value="1"/>
</dbReference>
<dbReference type="PANTHER" id="PTHR43861">
    <property type="entry name" value="TRANS-ACONITATE 2-METHYLTRANSFERASE-RELATED"/>
    <property type="match status" value="1"/>
</dbReference>
<dbReference type="Pfam" id="PF08241">
    <property type="entry name" value="Methyltransf_11"/>
    <property type="match status" value="1"/>
</dbReference>
<dbReference type="SUPFAM" id="SSF53335">
    <property type="entry name" value="S-adenosyl-L-methionine-dependent methyltransferases"/>
    <property type="match status" value="1"/>
</dbReference>
<protein>
    <recommendedName>
        <fullName evidence="1">Uncharacterized methyltransferase GTNG_2476</fullName>
        <ecNumber evidence="1">2.1.1.-</ecNumber>
    </recommendedName>
</protein>
<proteinExistence type="inferred from homology"/>
<comment type="function">
    <text evidence="1">Could be a S-adenosyl-L-methionine-dependent methyltransferase.</text>
</comment>
<comment type="similarity">
    <text evidence="1">Belongs to the methyltransferase superfamily. YrrT family.</text>
</comment>
<organism>
    <name type="scientific">Geobacillus thermodenitrificans (strain NG80-2)</name>
    <dbReference type="NCBI Taxonomy" id="420246"/>
    <lineage>
        <taxon>Bacteria</taxon>
        <taxon>Bacillati</taxon>
        <taxon>Bacillota</taxon>
        <taxon>Bacilli</taxon>
        <taxon>Bacillales</taxon>
        <taxon>Anoxybacillaceae</taxon>
        <taxon>Geobacillus</taxon>
    </lineage>
</organism>
<name>Y2476_GEOTN</name>
<gene>
    <name type="ordered locus">GTNG_2476</name>
</gene>
<sequence length="215" mass="24168">MGREFLDLFEQWAESYDQSVEGYDEQYRDVFAGYDRILSTVADKAGQVVLEFGIGTGNLTKKLLERGKTVYGIEPSAPMRKKAAEKLGERAVIMDGDFLQFPLPPEPIDTIASTYAFHHLTDAEKDEAIAKYSQLLHSGGKIVFADTAFRDKEAFRQTVEAARARGFHDLADDLEREYYTTLDVLASLFANHGFSVSFAQQNAFVWVMEAVKQTT</sequence>
<reference key="1">
    <citation type="journal article" date="2007" name="Proc. Natl. Acad. Sci. U.S.A.">
        <title>Genome and proteome of long-chain alkane degrading Geobacillus thermodenitrificans NG80-2 isolated from a deep-subsurface oil reservoir.</title>
        <authorList>
            <person name="Feng L."/>
            <person name="Wang W."/>
            <person name="Cheng J."/>
            <person name="Ren Y."/>
            <person name="Zhao G."/>
            <person name="Gao C."/>
            <person name="Tang Y."/>
            <person name="Liu X."/>
            <person name="Han W."/>
            <person name="Peng X."/>
            <person name="Liu R."/>
            <person name="Wang L."/>
        </authorList>
    </citation>
    <scope>NUCLEOTIDE SEQUENCE [LARGE SCALE GENOMIC DNA]</scope>
    <source>
        <strain>NG80-2</strain>
    </source>
</reference>